<feature type="chain" id="PRO_0000088047" description="DNA (cytosine-5)-methyltransferase 3-like">
    <location>
        <begin position="1"/>
        <end position="386"/>
    </location>
</feature>
<feature type="domain" description="ADD" evidence="2">
    <location>
        <begin position="41"/>
        <end position="173"/>
    </location>
</feature>
<feature type="zinc finger region" description="GATA-type; atypical" evidence="2">
    <location>
        <begin position="52"/>
        <end position="82"/>
    </location>
</feature>
<feature type="zinc finger region" description="PHD-type; atypical" evidence="2">
    <location>
        <begin position="93"/>
        <end position="149"/>
    </location>
</feature>
<feature type="splice variant" id="VSP_041295" description="In isoform 2." evidence="7">
    <original>S</original>
    <variation>SS</variation>
    <location>
        <position position="332"/>
    </location>
</feature>
<feature type="sequence variant" id="VAR_051962" description="In dbSNP:rs7354779." evidence="4">
    <original>R</original>
    <variation>G</variation>
    <location>
        <position position="278"/>
    </location>
</feature>
<feature type="mutagenesis site" description="Loss of binding to DNMT3A." evidence="6">
    <original>F</original>
    <variation>A</variation>
    <location>
        <position position="261"/>
    </location>
</feature>
<feature type="sequence conflict" description="In Ref. 1; AAF05812." evidence="8" ref="1">
    <original>P</original>
    <variation>A</variation>
    <location>
        <position position="246"/>
    </location>
</feature>
<feature type="sequence conflict" description="In Ref. 1; AAF05812." evidence="8" ref="1">
    <original>L</original>
    <variation>F</variation>
    <location>
        <position position="266"/>
    </location>
</feature>
<feature type="helix" evidence="9">
    <location>
        <begin position="35"/>
        <end position="43"/>
    </location>
</feature>
<feature type="helix" evidence="9">
    <location>
        <begin position="49"/>
        <end position="51"/>
    </location>
</feature>
<feature type="turn" evidence="9">
    <location>
        <begin position="54"/>
        <end position="56"/>
    </location>
</feature>
<feature type="strand" evidence="9">
    <location>
        <begin position="66"/>
        <end position="71"/>
    </location>
</feature>
<feature type="helix" evidence="9">
    <location>
        <begin position="74"/>
        <end position="81"/>
    </location>
</feature>
<feature type="turn" evidence="9">
    <location>
        <begin position="82"/>
        <end position="85"/>
    </location>
</feature>
<feature type="strand" evidence="9">
    <location>
        <begin position="89"/>
        <end position="93"/>
    </location>
</feature>
<feature type="turn" evidence="9">
    <location>
        <begin position="97"/>
        <end position="99"/>
    </location>
</feature>
<feature type="helix" evidence="9">
    <location>
        <begin position="119"/>
        <end position="125"/>
    </location>
</feature>
<feature type="helix" evidence="9">
    <location>
        <begin position="130"/>
        <end position="136"/>
    </location>
</feature>
<feature type="turn" evidence="9">
    <location>
        <begin position="143"/>
        <end position="145"/>
    </location>
</feature>
<feature type="strand" evidence="9">
    <location>
        <begin position="154"/>
        <end position="156"/>
    </location>
</feature>
<feature type="helix" evidence="9">
    <location>
        <begin position="160"/>
        <end position="171"/>
    </location>
</feature>
<feature type="helix" evidence="10">
    <location>
        <begin position="184"/>
        <end position="186"/>
    </location>
</feature>
<feature type="strand" evidence="10">
    <location>
        <begin position="192"/>
        <end position="197"/>
    </location>
</feature>
<feature type="helix" evidence="10">
    <location>
        <begin position="200"/>
        <end position="204"/>
    </location>
</feature>
<feature type="turn" evidence="10">
    <location>
        <begin position="205"/>
        <end position="207"/>
    </location>
</feature>
<feature type="strand" evidence="10">
    <location>
        <begin position="218"/>
        <end position="222"/>
    </location>
</feature>
<feature type="helix" evidence="10">
    <location>
        <begin position="224"/>
        <end position="226"/>
    </location>
</feature>
<feature type="helix" evidence="10">
    <location>
        <begin position="229"/>
        <end position="234"/>
    </location>
</feature>
<feature type="strand" evidence="10">
    <location>
        <begin position="239"/>
        <end position="244"/>
    </location>
</feature>
<feature type="strand" evidence="10">
    <location>
        <begin position="248"/>
        <end position="250"/>
    </location>
</feature>
<feature type="helix" evidence="10">
    <location>
        <begin position="256"/>
        <end position="269"/>
    </location>
</feature>
<feature type="strand" evidence="10">
    <location>
        <begin position="281"/>
        <end position="286"/>
    </location>
</feature>
<feature type="helix" evidence="10">
    <location>
        <begin position="292"/>
        <end position="301"/>
    </location>
</feature>
<feature type="strand" evidence="10">
    <location>
        <begin position="307"/>
        <end position="310"/>
    </location>
</feature>
<feature type="strand" evidence="9">
    <location>
        <begin position="314"/>
        <end position="316"/>
    </location>
</feature>
<feature type="strand" evidence="10">
    <location>
        <begin position="320"/>
        <end position="325"/>
    </location>
</feature>
<feature type="helix" evidence="10">
    <location>
        <begin position="329"/>
        <end position="332"/>
    </location>
</feature>
<feature type="helix" evidence="10">
    <location>
        <begin position="340"/>
        <end position="353"/>
    </location>
</feature>
<feature type="helix" evidence="10">
    <location>
        <begin position="361"/>
        <end position="366"/>
    </location>
</feature>
<feature type="helix" evidence="10">
    <location>
        <begin position="367"/>
        <end position="371"/>
    </location>
</feature>
<feature type="turn" evidence="10">
    <location>
        <begin position="372"/>
        <end position="374"/>
    </location>
</feature>
<name>DNM3L_HUMAN</name>
<sequence>MAAIPALDPEAEPSMDVILVGSSELSSSVSPGTGRDLIAYEVKANQRNIEDICICCGSLQVHTQHPLFEGGICAPCKDKFLDALFLYDDDGYQSYCSICCSGETLLICGNPDCTRCYCFECVDSLVGPGTSGKVHAMSNWVCYLCLPSSRSGLLQRRRKWRSQLKAFYDRESENPLEMFETVPVWRRQPVRVLSLFEDIKKELTSLGFLESGSDPGQLKHVVDVTDTVRKDVEEWGPFDLVYGATPPLGHTCDRPPSWYLFQFHRLLQYARPKPGSPRPFFWMFVDNLVLNKEDLDVASRFLEMEPVTIPDVHGGSLQNAVRVWSNIPAIRSRHWALVSEEELSLLAQNKQSSKLAAKWPTKLVKNCFLPLREYFKYFSTELTSSL</sequence>
<dbReference type="EMBL" id="AF194032">
    <property type="protein sequence ID" value="AAF05812.1"/>
    <property type="molecule type" value="mRNA"/>
</dbReference>
<dbReference type="EMBL" id="AP001753">
    <property type="protein sequence ID" value="BAA95556.1"/>
    <property type="molecule type" value="Genomic_DNA"/>
</dbReference>
<dbReference type="EMBL" id="AP001059">
    <property type="status" value="NOT_ANNOTATED_CDS"/>
    <property type="molecule type" value="Genomic_DNA"/>
</dbReference>
<dbReference type="EMBL" id="AP001060">
    <property type="status" value="NOT_ANNOTATED_CDS"/>
    <property type="molecule type" value="Genomic_DNA"/>
</dbReference>
<dbReference type="EMBL" id="CH471079">
    <property type="protein sequence ID" value="EAX09445.1"/>
    <property type="molecule type" value="Genomic_DNA"/>
</dbReference>
<dbReference type="EMBL" id="BC002560">
    <property type="protein sequence ID" value="AAH02560.1"/>
    <property type="molecule type" value="mRNA"/>
</dbReference>
<dbReference type="CCDS" id="CCDS13705.1">
    <molecule id="Q9UJW3-2"/>
</dbReference>
<dbReference type="CCDS" id="CCDS46650.1">
    <molecule id="Q9UJW3-1"/>
</dbReference>
<dbReference type="RefSeq" id="NP_037501.2">
    <molecule id="Q9UJW3-2"/>
    <property type="nucleotide sequence ID" value="NM_013369.3"/>
</dbReference>
<dbReference type="RefSeq" id="NP_787063.1">
    <molecule id="Q9UJW3-1"/>
    <property type="nucleotide sequence ID" value="NM_175867.3"/>
</dbReference>
<dbReference type="PDB" id="2PV0">
    <property type="method" value="X-ray"/>
    <property type="resolution" value="3.30 A"/>
    <property type="chains" value="A/B/C=1-386"/>
</dbReference>
<dbReference type="PDB" id="2PVC">
    <property type="method" value="X-ray"/>
    <property type="resolution" value="3.69 A"/>
    <property type="chains" value="A/B/C=1-386"/>
</dbReference>
<dbReference type="PDB" id="2QRV">
    <property type="method" value="X-ray"/>
    <property type="resolution" value="2.89 A"/>
    <property type="chains" value="B/C/F/G=160-386"/>
</dbReference>
<dbReference type="PDB" id="4U7P">
    <property type="method" value="X-ray"/>
    <property type="resolution" value="3.82 A"/>
    <property type="chains" value="B=178-379"/>
</dbReference>
<dbReference type="PDB" id="4U7T">
    <property type="method" value="X-ray"/>
    <property type="resolution" value="2.90 A"/>
    <property type="chains" value="B/D=178-379"/>
</dbReference>
<dbReference type="PDB" id="5YX2">
    <property type="method" value="X-ray"/>
    <property type="resolution" value="2.65 A"/>
    <property type="chains" value="B/C=178-385"/>
</dbReference>
<dbReference type="PDB" id="6BRR">
    <property type="method" value="X-ray"/>
    <property type="resolution" value="2.97 A"/>
    <property type="chains" value="B/C=178-386"/>
</dbReference>
<dbReference type="PDB" id="6F57">
    <property type="method" value="X-ray"/>
    <property type="resolution" value="3.10 A"/>
    <property type="chains" value="B/C=178-386"/>
</dbReference>
<dbReference type="PDB" id="6KDA">
    <property type="method" value="X-ray"/>
    <property type="resolution" value="2.91 A"/>
    <property type="chains" value="B/C=178-379"/>
</dbReference>
<dbReference type="PDB" id="6KDB">
    <property type="method" value="X-ray"/>
    <property type="resolution" value="2.86 A"/>
    <property type="chains" value="B/C=178-379"/>
</dbReference>
<dbReference type="PDB" id="6KDL">
    <property type="method" value="X-ray"/>
    <property type="resolution" value="3.27 A"/>
    <property type="chains" value="B/C=178-379"/>
</dbReference>
<dbReference type="PDB" id="6KDP">
    <property type="method" value="X-ray"/>
    <property type="resolution" value="2.93 A"/>
    <property type="chains" value="B/C=178-379"/>
</dbReference>
<dbReference type="PDB" id="6KDT">
    <property type="method" value="X-ray"/>
    <property type="resolution" value="2.87 A"/>
    <property type="chains" value="B/C=178-379"/>
</dbReference>
<dbReference type="PDB" id="6U8P">
    <property type="method" value="X-ray"/>
    <property type="resolution" value="3.05 A"/>
    <property type="chains" value="B/C=178-386"/>
</dbReference>
<dbReference type="PDB" id="6U8V">
    <property type="method" value="X-ray"/>
    <property type="resolution" value="3.00 A"/>
    <property type="chains" value="B/C=178-386"/>
</dbReference>
<dbReference type="PDB" id="6U8W">
    <property type="method" value="X-ray"/>
    <property type="resolution" value="2.95 A"/>
    <property type="chains" value="B/C=178-386"/>
</dbReference>
<dbReference type="PDB" id="6U8X">
    <property type="method" value="X-ray"/>
    <property type="resolution" value="2.95 A"/>
    <property type="chains" value="B/C=178-386"/>
</dbReference>
<dbReference type="PDB" id="6U90">
    <property type="method" value="X-ray"/>
    <property type="resolution" value="3.00 A"/>
    <property type="chains" value="B/C=178-386"/>
</dbReference>
<dbReference type="PDB" id="6U91">
    <property type="method" value="X-ray"/>
    <property type="resolution" value="3.00 A"/>
    <property type="chains" value="B/C=178-386"/>
</dbReference>
<dbReference type="PDB" id="6W89">
    <property type="method" value="X-ray"/>
    <property type="resolution" value="2.50 A"/>
    <property type="chains" value="B/C/H/I=178-386"/>
</dbReference>
<dbReference type="PDB" id="6W8B">
    <property type="method" value="X-ray"/>
    <property type="resolution" value="2.40 A"/>
    <property type="chains" value="B/C/I/J=178-386"/>
</dbReference>
<dbReference type="PDB" id="6W8D">
    <property type="method" value="X-ray"/>
    <property type="resolution" value="2.60 A"/>
    <property type="chains" value="B/C=178-386"/>
</dbReference>
<dbReference type="PDB" id="6W8J">
    <property type="method" value="X-ray"/>
    <property type="resolution" value="2.44 A"/>
    <property type="chains" value="B/C=178-386"/>
</dbReference>
<dbReference type="PDB" id="7X9D">
    <property type="method" value="X-ray"/>
    <property type="resolution" value="3.08 A"/>
    <property type="chains" value="B/C=178-379"/>
</dbReference>
<dbReference type="PDB" id="8TCI">
    <property type="method" value="X-ray"/>
    <property type="resolution" value="3.19 A"/>
    <property type="chains" value="B/C=181-379"/>
</dbReference>
<dbReference type="PDB" id="8XEE">
    <property type="method" value="X-ray"/>
    <property type="resolution" value="3.03 A"/>
    <property type="chains" value="B/C=178-379"/>
</dbReference>
<dbReference type="PDBsum" id="2PV0"/>
<dbReference type="PDBsum" id="2PVC"/>
<dbReference type="PDBsum" id="2QRV"/>
<dbReference type="PDBsum" id="4U7P"/>
<dbReference type="PDBsum" id="4U7T"/>
<dbReference type="PDBsum" id="5YX2"/>
<dbReference type="PDBsum" id="6BRR"/>
<dbReference type="PDBsum" id="6F57"/>
<dbReference type="PDBsum" id="6KDA"/>
<dbReference type="PDBsum" id="6KDB"/>
<dbReference type="PDBsum" id="6KDL"/>
<dbReference type="PDBsum" id="6KDP"/>
<dbReference type="PDBsum" id="6KDT"/>
<dbReference type="PDBsum" id="6U8P"/>
<dbReference type="PDBsum" id="6U8V"/>
<dbReference type="PDBsum" id="6U8W"/>
<dbReference type="PDBsum" id="6U8X"/>
<dbReference type="PDBsum" id="6U90"/>
<dbReference type="PDBsum" id="6U91"/>
<dbReference type="PDBsum" id="6W89"/>
<dbReference type="PDBsum" id="6W8B"/>
<dbReference type="PDBsum" id="6W8D"/>
<dbReference type="PDBsum" id="6W8J"/>
<dbReference type="PDBsum" id="7X9D"/>
<dbReference type="PDBsum" id="8TCI"/>
<dbReference type="PDBsum" id="8XEE"/>
<dbReference type="SASBDB" id="Q9UJW3"/>
<dbReference type="SMR" id="Q9UJW3"/>
<dbReference type="BioGRID" id="118984">
    <property type="interactions" value="83"/>
</dbReference>
<dbReference type="ComplexPortal" id="CPX-6276">
    <property type="entry name" value="DNA (cytosine-5)-methyltransferase 3B complex"/>
</dbReference>
<dbReference type="ComplexPortal" id="CPX-944">
    <property type="entry name" value="DNA (cytosine-5)-methyltransferase 3A complex"/>
</dbReference>
<dbReference type="CORUM" id="Q9UJW3"/>
<dbReference type="DIP" id="DIP-35238N"/>
<dbReference type="FunCoup" id="Q9UJW3">
    <property type="interactions" value="43"/>
</dbReference>
<dbReference type="IntAct" id="Q9UJW3">
    <property type="interactions" value="9"/>
</dbReference>
<dbReference type="MINT" id="Q9UJW3"/>
<dbReference type="STRING" id="9606.ENSP00000270172"/>
<dbReference type="BindingDB" id="Q9UJW3"/>
<dbReference type="ChEMBL" id="CHEMBL3137291"/>
<dbReference type="ChEMBL" id="CHEMBL3885560"/>
<dbReference type="REBASE" id="4636">
    <property type="entry name" value="M.HsaDnmt3L"/>
</dbReference>
<dbReference type="GlyGen" id="Q9UJW3">
    <property type="glycosylation" value="2 sites, 1 O-linked glycan (1 site)"/>
</dbReference>
<dbReference type="iPTMnet" id="Q9UJW3"/>
<dbReference type="PhosphoSitePlus" id="Q9UJW3"/>
<dbReference type="BioMuta" id="DNMT3L"/>
<dbReference type="DMDM" id="334302913"/>
<dbReference type="PaxDb" id="9606-ENSP00000270172"/>
<dbReference type="PeptideAtlas" id="Q9UJW3"/>
<dbReference type="ABCD" id="Q9UJW3">
    <property type="antibodies" value="1 sequenced antibody"/>
</dbReference>
<dbReference type="Antibodypedia" id="10145">
    <property type="antibodies" value="573 antibodies from 42 providers"/>
</dbReference>
<dbReference type="DNASU" id="29947"/>
<dbReference type="Ensembl" id="ENST00000270172.7">
    <molecule id="Q9UJW3-2"/>
    <property type="protein sequence ID" value="ENSP00000270172.3"/>
    <property type="gene ID" value="ENSG00000142182.9"/>
</dbReference>
<dbReference type="Ensembl" id="ENST00000628202.3">
    <molecule id="Q9UJW3-1"/>
    <property type="protein sequence ID" value="ENSP00000486001.1"/>
    <property type="gene ID" value="ENSG00000142182.9"/>
</dbReference>
<dbReference type="GeneID" id="29947"/>
<dbReference type="KEGG" id="hsa:29947"/>
<dbReference type="MANE-Select" id="ENST00000628202.3">
    <property type="protein sequence ID" value="ENSP00000486001.1"/>
    <property type="RefSeq nucleotide sequence ID" value="NM_175867.3"/>
    <property type="RefSeq protein sequence ID" value="NP_787063.1"/>
</dbReference>
<dbReference type="UCSC" id="uc002zeg.3">
    <molecule id="Q9UJW3-1"/>
    <property type="organism name" value="human"/>
</dbReference>
<dbReference type="AGR" id="HGNC:2980"/>
<dbReference type="CTD" id="29947"/>
<dbReference type="DisGeNET" id="29947"/>
<dbReference type="GeneCards" id="DNMT3L"/>
<dbReference type="HGNC" id="HGNC:2980">
    <property type="gene designation" value="DNMT3L"/>
</dbReference>
<dbReference type="HPA" id="ENSG00000142182">
    <property type="expression patterns" value="Tissue enhanced (liver)"/>
</dbReference>
<dbReference type="MIM" id="606588">
    <property type="type" value="gene"/>
</dbReference>
<dbReference type="neXtProt" id="NX_Q9UJW3"/>
<dbReference type="OpenTargets" id="ENSG00000142182"/>
<dbReference type="PharmGKB" id="PA27447"/>
<dbReference type="VEuPathDB" id="HostDB:ENSG00000142182"/>
<dbReference type="eggNOG" id="ENOG502SIGQ">
    <property type="taxonomic scope" value="Eukaryota"/>
</dbReference>
<dbReference type="GeneTree" id="ENSGT00940000162228"/>
<dbReference type="InParanoid" id="Q9UJW3"/>
<dbReference type="OMA" id="ESPLEMY"/>
<dbReference type="OrthoDB" id="641149at2759"/>
<dbReference type="PAN-GO" id="Q9UJW3">
    <property type="GO annotations" value="5 GO annotations based on evolutionary models"/>
</dbReference>
<dbReference type="TreeFam" id="TF329039"/>
<dbReference type="PathwayCommons" id="Q9UJW3"/>
<dbReference type="Reactome" id="R-HSA-5334118">
    <property type="pathway name" value="DNA methylation"/>
</dbReference>
<dbReference type="Reactome" id="R-HSA-9845323">
    <property type="pathway name" value="Regulation of endogenous retroelements by Piwi-interacting RNAs (piRNAs)"/>
</dbReference>
<dbReference type="SignaLink" id="Q9UJW3"/>
<dbReference type="BioGRID-ORCS" id="29947">
    <property type="hits" value="6 hits in 1151 CRISPR screens"/>
</dbReference>
<dbReference type="EvolutionaryTrace" id="Q9UJW3"/>
<dbReference type="GeneWiki" id="DNMT3L"/>
<dbReference type="GenomeRNAi" id="29947"/>
<dbReference type="Pharos" id="Q9UJW3">
    <property type="development level" value="Tbio"/>
</dbReference>
<dbReference type="PRO" id="PR:Q9UJW3"/>
<dbReference type="Proteomes" id="UP000005640">
    <property type="component" value="Chromosome 21"/>
</dbReference>
<dbReference type="RNAct" id="Q9UJW3">
    <property type="molecule type" value="protein"/>
</dbReference>
<dbReference type="Bgee" id="ENSG00000142182">
    <property type="expression patterns" value="Expressed in male germ line stem cell (sensu Vertebrata) in testis and 58 other cell types or tissues"/>
</dbReference>
<dbReference type="ExpressionAtlas" id="Q9UJW3">
    <property type="expression patterns" value="baseline and differential"/>
</dbReference>
<dbReference type="GO" id="GO:1902494">
    <property type="term" value="C:catalytic complex"/>
    <property type="evidence" value="ECO:0000353"/>
    <property type="project" value="ComplexPortal"/>
</dbReference>
<dbReference type="GO" id="GO:0000794">
    <property type="term" value="C:condensed nuclear chromosome"/>
    <property type="evidence" value="ECO:0007669"/>
    <property type="project" value="Ensembl"/>
</dbReference>
<dbReference type="GO" id="GO:0005737">
    <property type="term" value="C:cytoplasm"/>
    <property type="evidence" value="ECO:0000318"/>
    <property type="project" value="GO_Central"/>
</dbReference>
<dbReference type="GO" id="GO:0005829">
    <property type="term" value="C:cytosol"/>
    <property type="evidence" value="ECO:0007005"/>
    <property type="project" value="UniProtKB"/>
</dbReference>
<dbReference type="GO" id="GO:0035098">
    <property type="term" value="C:ESC/E(Z) complex"/>
    <property type="evidence" value="ECO:0007669"/>
    <property type="project" value="Ensembl"/>
</dbReference>
<dbReference type="GO" id="GO:0000792">
    <property type="term" value="C:heterochromatin"/>
    <property type="evidence" value="ECO:0007669"/>
    <property type="project" value="Ensembl"/>
</dbReference>
<dbReference type="GO" id="GO:0005634">
    <property type="term" value="C:nucleus"/>
    <property type="evidence" value="ECO:0007005"/>
    <property type="project" value="UniProtKB"/>
</dbReference>
<dbReference type="GO" id="GO:0008047">
    <property type="term" value="F:enzyme activator activity"/>
    <property type="evidence" value="ECO:0000314"/>
    <property type="project" value="MGI"/>
</dbReference>
<dbReference type="GO" id="GO:0019899">
    <property type="term" value="F:enzyme binding"/>
    <property type="evidence" value="ECO:0000353"/>
    <property type="project" value="UniProtKB"/>
</dbReference>
<dbReference type="GO" id="GO:0008270">
    <property type="term" value="F:zinc ion binding"/>
    <property type="evidence" value="ECO:0007669"/>
    <property type="project" value="UniProtKB-KW"/>
</dbReference>
<dbReference type="GO" id="GO:0141068">
    <property type="term" value="P:autosome genomic imprinting"/>
    <property type="evidence" value="ECO:0007669"/>
    <property type="project" value="Ensembl"/>
</dbReference>
<dbReference type="GO" id="GO:0060718">
    <property type="term" value="P:chorionic trophoblast cell differentiation"/>
    <property type="evidence" value="ECO:0007669"/>
    <property type="project" value="Ensembl"/>
</dbReference>
<dbReference type="GO" id="GO:0006346">
    <property type="term" value="P:DNA methylation-dependent constitutive heterochromatin formation"/>
    <property type="evidence" value="ECO:0000250"/>
    <property type="project" value="UniProtKB"/>
</dbReference>
<dbReference type="GO" id="GO:0044726">
    <property type="term" value="P:epigenetic programing of female pronucleus"/>
    <property type="evidence" value="ECO:0007669"/>
    <property type="project" value="Ensembl"/>
</dbReference>
<dbReference type="GO" id="GO:0071514">
    <property type="term" value="P:genomic imprinting"/>
    <property type="evidence" value="ECO:0000250"/>
    <property type="project" value="UniProtKB"/>
</dbReference>
<dbReference type="GO" id="GO:0007141">
    <property type="term" value="P:male meiosis I"/>
    <property type="evidence" value="ECO:0000250"/>
    <property type="project" value="UniProtKB"/>
</dbReference>
<dbReference type="GO" id="GO:0032259">
    <property type="term" value="P:methylation"/>
    <property type="evidence" value="ECO:0007669"/>
    <property type="project" value="Ensembl"/>
</dbReference>
<dbReference type="GO" id="GO:0090310">
    <property type="term" value="P:negative regulation of DNA methylation-dependent heterochromatin formation"/>
    <property type="evidence" value="ECO:0000250"/>
    <property type="project" value="UniProtKB"/>
</dbReference>
<dbReference type="GO" id="GO:0045892">
    <property type="term" value="P:negative regulation of DNA-templated transcription"/>
    <property type="evidence" value="ECO:0000318"/>
    <property type="project" value="GO_Central"/>
</dbReference>
<dbReference type="GO" id="GO:0044027">
    <property type="term" value="P:negative regulation of gene expression via chromosomal CpG island methylation"/>
    <property type="evidence" value="ECO:0007669"/>
    <property type="project" value="Ensembl"/>
</dbReference>
<dbReference type="GO" id="GO:0045814">
    <property type="term" value="P:negative regulation of gene expression, epigenetic"/>
    <property type="evidence" value="ECO:0000314"/>
    <property type="project" value="UniProtKB"/>
</dbReference>
<dbReference type="GO" id="GO:0001890">
    <property type="term" value="P:placenta development"/>
    <property type="evidence" value="ECO:0007669"/>
    <property type="project" value="Ensembl"/>
</dbReference>
<dbReference type="GO" id="GO:0009791">
    <property type="term" value="P:post-embryonic development"/>
    <property type="evidence" value="ECO:0007669"/>
    <property type="project" value="Ensembl"/>
</dbReference>
<dbReference type="GO" id="GO:0007283">
    <property type="term" value="P:spermatogenesis"/>
    <property type="evidence" value="ECO:0000250"/>
    <property type="project" value="UniProtKB"/>
</dbReference>
<dbReference type="GO" id="GO:0048863">
    <property type="term" value="P:stem cell differentiation"/>
    <property type="evidence" value="ECO:0000250"/>
    <property type="project" value="UniProtKB"/>
</dbReference>
<dbReference type="GO" id="GO:0141005">
    <property type="term" value="P:transposable element silencing by heterochromatin formation"/>
    <property type="evidence" value="ECO:0000250"/>
    <property type="project" value="UniProtKB"/>
</dbReference>
<dbReference type="GO" id="GO:0141196">
    <property type="term" value="P:transposable element silencing by piRNA-mediated DNA methylation"/>
    <property type="evidence" value="ECO:0007669"/>
    <property type="project" value="Ensembl"/>
</dbReference>
<dbReference type="FunFam" id="3.40.50.150:FF:000275">
    <property type="entry name" value="DNA (cytosine-5)-methyltransferase 3-like"/>
    <property type="match status" value="1"/>
</dbReference>
<dbReference type="Gene3D" id="3.40.50.150">
    <property type="entry name" value="Vaccinia Virus protein VP39"/>
    <property type="match status" value="1"/>
</dbReference>
<dbReference type="Gene3D" id="3.30.40.10">
    <property type="entry name" value="Zinc/RING finger domain, C3HC4 (zinc finger)"/>
    <property type="match status" value="1"/>
</dbReference>
<dbReference type="InterPro" id="IPR025766">
    <property type="entry name" value="ADD"/>
</dbReference>
<dbReference type="InterPro" id="IPR040552">
    <property type="entry name" value="DNMT3_ADD_GATA1-like"/>
</dbReference>
<dbReference type="InterPro" id="IPR049554">
    <property type="entry name" value="DNMT3_ADD_PHD"/>
</dbReference>
<dbReference type="InterPro" id="IPR029063">
    <property type="entry name" value="SAM-dependent_MTases_sf"/>
</dbReference>
<dbReference type="InterPro" id="IPR011011">
    <property type="entry name" value="Znf_FYVE_PHD"/>
</dbReference>
<dbReference type="InterPro" id="IPR013083">
    <property type="entry name" value="Znf_RING/FYVE/PHD"/>
</dbReference>
<dbReference type="PANTHER" id="PTHR23068:SF13">
    <property type="entry name" value="DNA (CYTOSINE-5)-METHYLTRANSFERASE 3-LIKE"/>
    <property type="match status" value="1"/>
</dbReference>
<dbReference type="PANTHER" id="PTHR23068">
    <property type="entry name" value="DNA CYTOSINE-5- -METHYLTRANSFERASE 3-RELATED"/>
    <property type="match status" value="1"/>
</dbReference>
<dbReference type="Pfam" id="PF17980">
    <property type="entry name" value="ADD_DNMT3"/>
    <property type="match status" value="1"/>
</dbReference>
<dbReference type="Pfam" id="PF21255">
    <property type="entry name" value="DNMT3_ADD_GATA1-like"/>
    <property type="match status" value="1"/>
</dbReference>
<dbReference type="SUPFAM" id="SSF57903">
    <property type="entry name" value="FYVE/PHD zinc finger"/>
    <property type="match status" value="1"/>
</dbReference>
<dbReference type="PROSITE" id="PS51533">
    <property type="entry name" value="ADD"/>
    <property type="match status" value="1"/>
</dbReference>
<accession>Q9UJW3</accession>
<accession>E9PB42</accession>
<accession>Q9BUJ4</accession>
<gene>
    <name type="primary">DNMT3L</name>
</gene>
<organism>
    <name type="scientific">Homo sapiens</name>
    <name type="common">Human</name>
    <dbReference type="NCBI Taxonomy" id="9606"/>
    <lineage>
        <taxon>Eukaryota</taxon>
        <taxon>Metazoa</taxon>
        <taxon>Chordata</taxon>
        <taxon>Craniata</taxon>
        <taxon>Vertebrata</taxon>
        <taxon>Euteleostomi</taxon>
        <taxon>Mammalia</taxon>
        <taxon>Eutheria</taxon>
        <taxon>Euarchontoglires</taxon>
        <taxon>Primates</taxon>
        <taxon>Haplorrhini</taxon>
        <taxon>Catarrhini</taxon>
        <taxon>Hominidae</taxon>
        <taxon>Homo</taxon>
    </lineage>
</organism>
<evidence type="ECO:0000250" key="1">
    <source>
        <dbReference type="UniProtKB" id="Q9CWR8"/>
    </source>
</evidence>
<evidence type="ECO:0000255" key="2">
    <source>
        <dbReference type="PROSITE-ProRule" id="PRU00865"/>
    </source>
</evidence>
<evidence type="ECO:0000269" key="3">
    <source>
    </source>
</evidence>
<evidence type="ECO:0000269" key="4">
    <source>
    </source>
</evidence>
<evidence type="ECO:0000269" key="5">
    <source>
    </source>
</evidence>
<evidence type="ECO:0000269" key="6">
    <source>
    </source>
</evidence>
<evidence type="ECO:0000303" key="7">
    <source>
    </source>
</evidence>
<evidence type="ECO:0000305" key="8"/>
<evidence type="ECO:0007829" key="9">
    <source>
        <dbReference type="PDB" id="2PV0"/>
    </source>
</evidence>
<evidence type="ECO:0007829" key="10">
    <source>
        <dbReference type="PDB" id="6W8B"/>
    </source>
</evidence>
<comment type="function">
    <text evidence="1 5">Catalytically inactive regulatory factor of DNA methyltransferases that can either promote or inhibit DNA methylation depending on the context (By similarity). Essential for the function of DNMT3A and DNMT3B: activates DNMT3A and DNMT3B by binding to their catalytic domain (PubMed:17687327). Acts by accelerating the binding of DNA and S-adenosyl-L-methionine (AdoMet) to the methyltransferases and dissociates from the complex after DNA binding to the methyltransferases (PubMed:17687327). Recognizes unmethylated histone H3 lysine 4 (H3K4me0) and induces de novo DNA methylation by recruitment or activation of DNMT3 (PubMed:17687327). Plays a key role in embryonic stem cells and germ cells (By similarity). In germ cells, required for the methylation of imprinted loci together with DNMT3A (By similarity). In male germ cells, specifically required to methylate retrotransposons, preventing their mobilization (By similarity). Plays a key role in embryonic stem cells (ESCs) by acting both as an positive and negative regulator of DNA methylation (By similarity). While it promotes DNA methylation of housekeeping genes together with DNMT3A and DNMT3B, it also acts as an inhibitor of DNA methylation at the promoter of bivalent genes (By similarity). Interacts with the EZH2 component of the PRC2/EED-EZH2 complex, preventing interaction of DNMT3A and DNMT3B with the PRC2/EED-EZH2 complex, leading to maintain low methylation levels at the promoters of bivalent genes (By similarity). Promotes differentiation of ESCs into primordial germ cells by inhibiting DNA methylation at the promoter of RHOX5, thereby activating its expression (By similarity).</text>
</comment>
<comment type="subunit">
    <text evidence="1 5 6">Homodimer (PubMed:17687327, PubMed:17713477). Heterotetramer composed of 1 DNMT3A homodimer and 2 DNMT3L subunits (DNMT3L-DNMT3A-DNMT3A-DNMT3L) (PubMed:17713477). Interacts with histone H3 (via N-terminus); interaction is strongly inhibited by methylation at lysine 4 (H3K4me) (PubMed:17687327). Interacts with EZH2; the interaction is direct (By similarity). Interacts with SPOCD1 (By similarity).</text>
</comment>
<comment type="interaction">
    <interactant intactId="EBI-740967">
        <id>Q9UJW3</id>
    </interactant>
    <interactant intactId="EBI-301834">
        <id>Q13547</id>
        <label>HDAC1</label>
    </interactant>
    <organismsDiffer>false</organismsDiffer>
    <experiments>3</experiments>
</comment>
<comment type="interaction">
    <interactant intactId="EBI-740967">
        <id>Q9UJW3</id>
    </interactant>
    <interactant intactId="EBI-10239064">
        <id>Q17RL8</id>
        <label>PDZD4</label>
    </interactant>
    <organismsDiffer>false</organismsDiffer>
    <experiments>3</experiments>
</comment>
<comment type="interaction">
    <interactant intactId="EBI-740967">
        <id>Q9UJW3</id>
    </interactant>
    <interactant intactId="EBI-749321">
        <id>Q9UHA3</id>
        <label>RSL24D1</label>
    </interactant>
    <organismsDiffer>false</organismsDiffer>
    <experiments>7</experiments>
</comment>
<comment type="interaction">
    <interactant intactId="EBI-15650345">
        <id>Q9UJW3-1</id>
    </interactant>
    <interactant intactId="EBI-923653">
        <id>Q9Y6K1</id>
        <label>DNMT3A</label>
    </interactant>
    <organismsDiffer>false</organismsDiffer>
    <experiments>5</experiments>
</comment>
<comment type="subcellular location">
    <subcellularLocation>
        <location evidence="8">Nucleus</location>
    </subcellularLocation>
</comment>
<comment type="alternative products">
    <event type="alternative splicing"/>
    <isoform>
        <id>Q9UJW3-1</id>
        <name>1</name>
        <sequence type="displayed"/>
    </isoform>
    <isoform>
        <id>Q9UJW3-2</id>
        <name>2</name>
        <sequence type="described" ref="VSP_041295"/>
    </isoform>
    <text>Other splice isoforms seem to exist.</text>
</comment>
<comment type="tissue specificity">
    <text evidence="3">Expressed at low levels in several tissues including testis, ovary, and thymus.</text>
</comment>
<comment type="miscellaneous">
    <text>Interaction with histone H3 is strongly inhibited by methylation at lysine 4 (H3K4me).</text>
</comment>
<protein>
    <recommendedName>
        <fullName>DNA (cytosine-5)-methyltransferase 3-like</fullName>
    </recommendedName>
</protein>
<reference key="1">
    <citation type="journal article" date="2000" name="Genomics">
        <title>Isolation and initial characterization of a novel zinc finger gene, DNMT3L, on 21q22.3, related to the cytosine-5-methyltransferase 3 gene family.</title>
        <authorList>
            <person name="Aapola U."/>
            <person name="Shibuya K."/>
            <person name="Scott H.S."/>
            <person name="Ollila J."/>
            <person name="Vihinen M."/>
            <person name="Heino M."/>
            <person name="Shintani A."/>
            <person name="Kawasaki K."/>
            <person name="Minoshima S."/>
            <person name="Krohn K."/>
            <person name="Antonarakis S.E."/>
            <person name="Shimizu N."/>
            <person name="Kudoh J."/>
            <person name="Peterson P."/>
        </authorList>
    </citation>
    <scope>NUCLEOTIDE SEQUENCE [MRNA] (ISOFORM 2)</scope>
    <scope>ALTERNATIVE SPLICING</scope>
    <scope>TISSUE SPECIFICITY</scope>
</reference>
<reference key="2">
    <citation type="journal article" date="2000" name="Nature">
        <title>The DNA sequence of human chromosome 21.</title>
        <authorList>
            <person name="Hattori M."/>
            <person name="Fujiyama A."/>
            <person name="Taylor T.D."/>
            <person name="Watanabe H."/>
            <person name="Yada T."/>
            <person name="Park H.-S."/>
            <person name="Toyoda A."/>
            <person name="Ishii K."/>
            <person name="Totoki Y."/>
            <person name="Choi D.-K."/>
            <person name="Groner Y."/>
            <person name="Soeda E."/>
            <person name="Ohki M."/>
            <person name="Takagi T."/>
            <person name="Sakaki Y."/>
            <person name="Taudien S."/>
            <person name="Blechschmidt K."/>
            <person name="Polley A."/>
            <person name="Menzel U."/>
            <person name="Delabar J."/>
            <person name="Kumpf K."/>
            <person name="Lehmann R."/>
            <person name="Patterson D."/>
            <person name="Reichwald K."/>
            <person name="Rump A."/>
            <person name="Schillhabel M."/>
            <person name="Schudy A."/>
            <person name="Zimmermann W."/>
            <person name="Rosenthal A."/>
            <person name="Kudoh J."/>
            <person name="Shibuya K."/>
            <person name="Kawasaki K."/>
            <person name="Asakawa S."/>
            <person name="Shintani A."/>
            <person name="Sasaki T."/>
            <person name="Nagamine K."/>
            <person name="Mitsuyama S."/>
            <person name="Antonarakis S.E."/>
            <person name="Minoshima S."/>
            <person name="Shimizu N."/>
            <person name="Nordsiek G."/>
            <person name="Hornischer K."/>
            <person name="Brandt P."/>
            <person name="Scharfe M."/>
            <person name="Schoen O."/>
            <person name="Desario A."/>
            <person name="Reichelt J."/>
            <person name="Kauer G."/>
            <person name="Bloecker H."/>
            <person name="Ramser J."/>
            <person name="Beck A."/>
            <person name="Klages S."/>
            <person name="Hennig S."/>
            <person name="Riesselmann L."/>
            <person name="Dagand E."/>
            <person name="Wehrmeyer S."/>
            <person name="Borzym K."/>
            <person name="Gardiner K."/>
            <person name="Nizetic D."/>
            <person name="Francis F."/>
            <person name="Lehrach H."/>
            <person name="Reinhardt R."/>
            <person name="Yaspo M.-L."/>
        </authorList>
    </citation>
    <scope>NUCLEOTIDE SEQUENCE [LARGE SCALE GENOMIC DNA]</scope>
</reference>
<reference key="3">
    <citation type="submission" date="2005-07" db="EMBL/GenBank/DDBJ databases">
        <authorList>
            <person name="Mural R.J."/>
            <person name="Istrail S."/>
            <person name="Sutton G.G."/>
            <person name="Florea L."/>
            <person name="Halpern A.L."/>
            <person name="Mobarry C.M."/>
            <person name="Lippert R."/>
            <person name="Walenz B."/>
            <person name="Shatkay H."/>
            <person name="Dew I."/>
            <person name="Miller J.R."/>
            <person name="Flanigan M.J."/>
            <person name="Edwards N.J."/>
            <person name="Bolanos R."/>
            <person name="Fasulo D."/>
            <person name="Halldorsson B.V."/>
            <person name="Hannenhalli S."/>
            <person name="Turner R."/>
            <person name="Yooseph S."/>
            <person name="Lu F."/>
            <person name="Nusskern D.R."/>
            <person name="Shue B.C."/>
            <person name="Zheng X.H."/>
            <person name="Zhong F."/>
            <person name="Delcher A.L."/>
            <person name="Huson D.H."/>
            <person name="Kravitz S.A."/>
            <person name="Mouchard L."/>
            <person name="Reinert K."/>
            <person name="Remington K.A."/>
            <person name="Clark A.G."/>
            <person name="Waterman M.S."/>
            <person name="Eichler E.E."/>
            <person name="Adams M.D."/>
            <person name="Hunkapiller M.W."/>
            <person name="Myers E.W."/>
            <person name="Venter J.C."/>
        </authorList>
    </citation>
    <scope>NUCLEOTIDE SEQUENCE [LARGE SCALE GENOMIC DNA]</scope>
</reference>
<reference key="4">
    <citation type="journal article" date="2004" name="Genome Res.">
        <title>The status, quality, and expansion of the NIH full-length cDNA project: the Mammalian Gene Collection (MGC).</title>
        <authorList>
            <consortium name="The MGC Project Team"/>
        </authorList>
    </citation>
    <scope>NUCLEOTIDE SEQUENCE [LARGE SCALE MRNA] (ISOFORM 1)</scope>
    <scope>VARIANT GLY-278</scope>
    <source>
        <tissue>Placenta</tissue>
    </source>
</reference>
<reference key="5">
    <citation type="journal article" date="2007" name="Nature">
        <title>DNMT3L connects unmethylated lysine 4 of histone H3 to de novo methylation of DNA.</title>
        <authorList>
            <person name="Ooi S.K."/>
            <person name="Qiu C."/>
            <person name="Bernstein E."/>
            <person name="Li K."/>
            <person name="Jia D."/>
            <person name="Yang Z."/>
            <person name="Erdjument-Bromage H."/>
            <person name="Tempst P."/>
            <person name="Lin S.-P."/>
            <person name="Allis C.D."/>
            <person name="Cheng X."/>
            <person name="Bestor T.H."/>
        </authorList>
    </citation>
    <scope>X-RAY CRYSTALLOGRAPHY (3.3 ANGSTROMS)</scope>
    <scope>FUNCTION</scope>
    <scope>HOMODIMERIZATION</scope>
</reference>
<reference key="6">
    <citation type="journal article" date="2007" name="Nature">
        <title>Structure of Dnmt3a bound to Dnmt3L suggests a model for de novo DNA methylation.</title>
        <authorList>
            <person name="Jia D."/>
            <person name="Jurkowska R.Z."/>
            <person name="Zhang X."/>
            <person name="Jeltsch A."/>
            <person name="Cheng X."/>
        </authorList>
    </citation>
    <scope>X-RAY CRYSTALLOGRAPHY (2.89 ANGSTROMS) OF 160-387</scope>
    <scope>SUBUNIT</scope>
    <scope>MUTAGENESIS OF PHE-261</scope>
</reference>
<proteinExistence type="evidence at protein level"/>
<keyword id="KW-0002">3D-structure</keyword>
<keyword id="KW-0025">Alternative splicing</keyword>
<keyword id="KW-0221">Differentiation</keyword>
<keyword id="KW-0479">Metal-binding</keyword>
<keyword id="KW-0539">Nucleus</keyword>
<keyword id="KW-1185">Reference proteome</keyword>
<keyword id="KW-0744">Spermatogenesis</keyword>
<keyword id="KW-0862">Zinc</keyword>
<keyword id="KW-0863">Zinc-finger</keyword>